<organism>
    <name type="scientific">Bartonella tribocorum (strain CIP 105476 / IBS 506)</name>
    <dbReference type="NCBI Taxonomy" id="382640"/>
    <lineage>
        <taxon>Bacteria</taxon>
        <taxon>Pseudomonadati</taxon>
        <taxon>Pseudomonadota</taxon>
        <taxon>Alphaproteobacteria</taxon>
        <taxon>Hyphomicrobiales</taxon>
        <taxon>Bartonellaceae</taxon>
        <taxon>Bartonella</taxon>
    </lineage>
</organism>
<accession>A9IQN4</accession>
<reference key="1">
    <citation type="journal article" date="2007" name="Nat. Genet.">
        <title>Genomic analysis of Bartonella identifies type IV secretion systems as host adaptability factors.</title>
        <authorList>
            <person name="Saenz H.L."/>
            <person name="Engel P."/>
            <person name="Stoeckli M.C."/>
            <person name="Lanz C."/>
            <person name="Raddatz G."/>
            <person name="Vayssier-Taussat M."/>
            <person name="Birtles R."/>
            <person name="Schuster S.C."/>
            <person name="Dehio C."/>
        </authorList>
    </citation>
    <scope>NUCLEOTIDE SEQUENCE [LARGE SCALE GENOMIC DNA]</scope>
    <source>
        <strain>CIP 105476 / IBS 506</strain>
    </source>
</reference>
<keyword id="KW-0028">Amino-acid biosynthesis</keyword>
<keyword id="KW-0057">Aromatic amino acid biosynthesis</keyword>
<keyword id="KW-0274">FAD</keyword>
<keyword id="KW-0285">Flavoprotein</keyword>
<keyword id="KW-0288">FMN</keyword>
<keyword id="KW-0456">Lyase</keyword>
<keyword id="KW-0521">NADP</keyword>
<proteinExistence type="inferred from homology"/>
<comment type="function">
    <text evidence="1">Catalyzes the anti-1,4-elimination of the C-3 phosphate and the C-6 proR hydrogen from 5-enolpyruvylshikimate-3-phosphate (EPSP) to yield chorismate, which is the branch point compound that serves as the starting substrate for the three terminal pathways of aromatic amino acid biosynthesis. This reaction introduces a second double bond into the aromatic ring system.</text>
</comment>
<comment type="catalytic activity">
    <reaction evidence="1">
        <text>5-O-(1-carboxyvinyl)-3-phosphoshikimate = chorismate + phosphate</text>
        <dbReference type="Rhea" id="RHEA:21020"/>
        <dbReference type="ChEBI" id="CHEBI:29748"/>
        <dbReference type="ChEBI" id="CHEBI:43474"/>
        <dbReference type="ChEBI" id="CHEBI:57701"/>
        <dbReference type="EC" id="4.2.3.5"/>
    </reaction>
</comment>
<comment type="cofactor">
    <cofactor evidence="1">
        <name>FMNH2</name>
        <dbReference type="ChEBI" id="CHEBI:57618"/>
    </cofactor>
    <text evidence="1">Reduced FMN (FMNH(2)).</text>
</comment>
<comment type="pathway">
    <text evidence="1">Metabolic intermediate biosynthesis; chorismate biosynthesis; chorismate from D-erythrose 4-phosphate and phosphoenolpyruvate: step 7/7.</text>
</comment>
<comment type="subunit">
    <text evidence="1">Homotetramer.</text>
</comment>
<comment type="similarity">
    <text evidence="1">Belongs to the chorismate synthase family.</text>
</comment>
<protein>
    <recommendedName>
        <fullName evidence="1">Chorismate synthase</fullName>
        <shortName evidence="1">CS</shortName>
        <ecNumber evidence="1">4.2.3.5</ecNumber>
    </recommendedName>
    <alternativeName>
        <fullName evidence="1">5-enolpyruvylshikimate-3-phosphate phospholyase</fullName>
    </alternativeName>
</protein>
<sequence length="362" mass="39159">MSHNTFGHLFRVTTWGESHGAALGCVIDGCPPGIIFTLAEIQAYLDKRRPGQSKYTTQRQEQDQVELLSGAITQEDGTTFVTTGTPISLLIRNTDQRSQDYGKIAHQYRPGHADYTYDVKYGIRDFRGGGRASARETAARVAAGALARKVVPHLVVRGAVIAIGPHHINRDRWDWSEVENNPFFTADAEMVQIFSDYIRKIRKDGTSVGAVIEIVAENVPAGLGAPIYAKLDQDIASLLMSINAVKGVEIGDGFAAARLRGEENADEMRMGNDGKPLFLSNHAGGILGGISSGQPIIARFAVKPTSSILTPRRSIDVDGHDVDVITKGRHDPCVGIRAVPVGEAMVACALADHYLRHRGQVG</sequence>
<gene>
    <name evidence="1" type="primary">aroC</name>
    <name type="ordered locus">BT_0645</name>
</gene>
<evidence type="ECO:0000255" key="1">
    <source>
        <dbReference type="HAMAP-Rule" id="MF_00300"/>
    </source>
</evidence>
<name>AROC_BART1</name>
<dbReference type="EC" id="4.2.3.5" evidence="1"/>
<dbReference type="EMBL" id="AM260525">
    <property type="protein sequence ID" value="CAK01080.1"/>
    <property type="molecule type" value="Genomic_DNA"/>
</dbReference>
<dbReference type="RefSeq" id="WP_012231186.1">
    <property type="nucleotide sequence ID" value="NC_010161.1"/>
</dbReference>
<dbReference type="SMR" id="A9IQN4"/>
<dbReference type="KEGG" id="btr:BT_0645"/>
<dbReference type="eggNOG" id="COG0082">
    <property type="taxonomic scope" value="Bacteria"/>
</dbReference>
<dbReference type="HOGENOM" id="CLU_034547_0_0_5"/>
<dbReference type="UniPathway" id="UPA00053">
    <property type="reaction ID" value="UER00090"/>
</dbReference>
<dbReference type="Proteomes" id="UP000001592">
    <property type="component" value="Chromosome"/>
</dbReference>
<dbReference type="GO" id="GO:0005829">
    <property type="term" value="C:cytosol"/>
    <property type="evidence" value="ECO:0007669"/>
    <property type="project" value="TreeGrafter"/>
</dbReference>
<dbReference type="GO" id="GO:0004107">
    <property type="term" value="F:chorismate synthase activity"/>
    <property type="evidence" value="ECO:0007669"/>
    <property type="project" value="UniProtKB-UniRule"/>
</dbReference>
<dbReference type="GO" id="GO:0010181">
    <property type="term" value="F:FMN binding"/>
    <property type="evidence" value="ECO:0007669"/>
    <property type="project" value="TreeGrafter"/>
</dbReference>
<dbReference type="GO" id="GO:0008652">
    <property type="term" value="P:amino acid biosynthetic process"/>
    <property type="evidence" value="ECO:0007669"/>
    <property type="project" value="UniProtKB-KW"/>
</dbReference>
<dbReference type="GO" id="GO:0009073">
    <property type="term" value="P:aromatic amino acid family biosynthetic process"/>
    <property type="evidence" value="ECO:0007669"/>
    <property type="project" value="UniProtKB-KW"/>
</dbReference>
<dbReference type="GO" id="GO:0009423">
    <property type="term" value="P:chorismate biosynthetic process"/>
    <property type="evidence" value="ECO:0007669"/>
    <property type="project" value="UniProtKB-UniRule"/>
</dbReference>
<dbReference type="CDD" id="cd07304">
    <property type="entry name" value="Chorismate_synthase"/>
    <property type="match status" value="1"/>
</dbReference>
<dbReference type="Gene3D" id="3.60.150.10">
    <property type="entry name" value="Chorismate synthase AroC"/>
    <property type="match status" value="1"/>
</dbReference>
<dbReference type="HAMAP" id="MF_00300">
    <property type="entry name" value="Chorismate_synth"/>
    <property type="match status" value="1"/>
</dbReference>
<dbReference type="InterPro" id="IPR000453">
    <property type="entry name" value="Chorismate_synth"/>
</dbReference>
<dbReference type="InterPro" id="IPR035904">
    <property type="entry name" value="Chorismate_synth_AroC_sf"/>
</dbReference>
<dbReference type="InterPro" id="IPR020541">
    <property type="entry name" value="Chorismate_synthase_CS"/>
</dbReference>
<dbReference type="NCBIfam" id="TIGR00033">
    <property type="entry name" value="aroC"/>
    <property type="match status" value="1"/>
</dbReference>
<dbReference type="NCBIfam" id="NF003793">
    <property type="entry name" value="PRK05382.1"/>
    <property type="match status" value="1"/>
</dbReference>
<dbReference type="PANTHER" id="PTHR21085">
    <property type="entry name" value="CHORISMATE SYNTHASE"/>
    <property type="match status" value="1"/>
</dbReference>
<dbReference type="PANTHER" id="PTHR21085:SF0">
    <property type="entry name" value="CHORISMATE SYNTHASE"/>
    <property type="match status" value="1"/>
</dbReference>
<dbReference type="Pfam" id="PF01264">
    <property type="entry name" value="Chorismate_synt"/>
    <property type="match status" value="1"/>
</dbReference>
<dbReference type="PIRSF" id="PIRSF001456">
    <property type="entry name" value="Chorismate_synth"/>
    <property type="match status" value="1"/>
</dbReference>
<dbReference type="SUPFAM" id="SSF103263">
    <property type="entry name" value="Chorismate synthase, AroC"/>
    <property type="match status" value="1"/>
</dbReference>
<dbReference type="PROSITE" id="PS00787">
    <property type="entry name" value="CHORISMATE_SYNTHASE_1"/>
    <property type="match status" value="1"/>
</dbReference>
<dbReference type="PROSITE" id="PS00788">
    <property type="entry name" value="CHORISMATE_SYNTHASE_2"/>
    <property type="match status" value="1"/>
</dbReference>
<dbReference type="PROSITE" id="PS00789">
    <property type="entry name" value="CHORISMATE_SYNTHASE_3"/>
    <property type="match status" value="1"/>
</dbReference>
<feature type="chain" id="PRO_1000078985" description="Chorismate synthase">
    <location>
        <begin position="1"/>
        <end position="362"/>
    </location>
</feature>
<feature type="binding site" evidence="1">
    <location>
        <position position="48"/>
    </location>
    <ligand>
        <name>NADP(+)</name>
        <dbReference type="ChEBI" id="CHEBI:58349"/>
    </ligand>
</feature>
<feature type="binding site" evidence="1">
    <location>
        <begin position="131"/>
        <end position="133"/>
    </location>
    <ligand>
        <name>FMN</name>
        <dbReference type="ChEBI" id="CHEBI:58210"/>
    </ligand>
</feature>
<feature type="binding site" evidence="1">
    <location>
        <begin position="243"/>
        <end position="244"/>
    </location>
    <ligand>
        <name>FMN</name>
        <dbReference type="ChEBI" id="CHEBI:58210"/>
    </ligand>
</feature>
<feature type="binding site" evidence="1">
    <location>
        <position position="288"/>
    </location>
    <ligand>
        <name>FMN</name>
        <dbReference type="ChEBI" id="CHEBI:58210"/>
    </ligand>
</feature>
<feature type="binding site" evidence="1">
    <location>
        <begin position="303"/>
        <end position="307"/>
    </location>
    <ligand>
        <name>FMN</name>
        <dbReference type="ChEBI" id="CHEBI:58210"/>
    </ligand>
</feature>
<feature type="binding site" evidence="1">
    <location>
        <position position="329"/>
    </location>
    <ligand>
        <name>FMN</name>
        <dbReference type="ChEBI" id="CHEBI:58210"/>
    </ligand>
</feature>